<reference key="1">
    <citation type="journal article" date="2008" name="Foodborne Pathog. Dis.">
        <title>The complete genome sequence and analysis of the human pathogen Campylobacter lari.</title>
        <authorList>
            <person name="Miller W.G."/>
            <person name="Wang G."/>
            <person name="Binnewies T.T."/>
            <person name="Parker C.T."/>
        </authorList>
    </citation>
    <scope>NUCLEOTIDE SEQUENCE [LARGE SCALE GENOMIC DNA]</scope>
    <source>
        <strain>RM2100 / D67 / ATCC BAA-1060</strain>
    </source>
</reference>
<feature type="chain" id="PRO_1000164910" description="GTP 3',8-cyclase">
    <location>
        <begin position="1"/>
        <end position="322"/>
    </location>
</feature>
<feature type="domain" description="Radical SAM core" evidence="2">
    <location>
        <begin position="5"/>
        <end position="217"/>
    </location>
</feature>
<feature type="binding site" evidence="1">
    <location>
        <position position="14"/>
    </location>
    <ligand>
        <name>GTP</name>
        <dbReference type="ChEBI" id="CHEBI:37565"/>
    </ligand>
</feature>
<feature type="binding site" evidence="1">
    <location>
        <position position="21"/>
    </location>
    <ligand>
        <name>[4Fe-4S] cluster</name>
        <dbReference type="ChEBI" id="CHEBI:49883"/>
        <label>1</label>
        <note>4Fe-4S-S-AdoMet</note>
    </ligand>
</feature>
<feature type="binding site" evidence="1">
    <location>
        <position position="25"/>
    </location>
    <ligand>
        <name>[4Fe-4S] cluster</name>
        <dbReference type="ChEBI" id="CHEBI:49883"/>
        <label>1</label>
        <note>4Fe-4S-S-AdoMet</note>
    </ligand>
</feature>
<feature type="binding site" evidence="1">
    <location>
        <position position="27"/>
    </location>
    <ligand>
        <name>S-adenosyl-L-methionine</name>
        <dbReference type="ChEBI" id="CHEBI:59789"/>
    </ligand>
</feature>
<feature type="binding site" evidence="1">
    <location>
        <position position="28"/>
    </location>
    <ligand>
        <name>[4Fe-4S] cluster</name>
        <dbReference type="ChEBI" id="CHEBI:49883"/>
        <label>1</label>
        <note>4Fe-4S-S-AdoMet</note>
    </ligand>
</feature>
<feature type="binding site" evidence="1">
    <location>
        <position position="64"/>
    </location>
    <ligand>
        <name>GTP</name>
        <dbReference type="ChEBI" id="CHEBI:37565"/>
    </ligand>
</feature>
<feature type="binding site" evidence="1">
    <location>
        <position position="68"/>
    </location>
    <ligand>
        <name>S-adenosyl-L-methionine</name>
        <dbReference type="ChEBI" id="CHEBI:59789"/>
    </ligand>
</feature>
<feature type="binding site" evidence="1">
    <location>
        <position position="95"/>
    </location>
    <ligand>
        <name>GTP</name>
        <dbReference type="ChEBI" id="CHEBI:37565"/>
    </ligand>
</feature>
<feature type="binding site" evidence="1">
    <location>
        <position position="119"/>
    </location>
    <ligand>
        <name>S-adenosyl-L-methionine</name>
        <dbReference type="ChEBI" id="CHEBI:59789"/>
    </ligand>
</feature>
<feature type="binding site" evidence="1">
    <location>
        <position position="155"/>
    </location>
    <ligand>
        <name>GTP</name>
        <dbReference type="ChEBI" id="CHEBI:37565"/>
    </ligand>
</feature>
<feature type="binding site" evidence="1">
    <location>
        <position position="189"/>
    </location>
    <ligand>
        <name>S-adenosyl-L-methionine</name>
        <dbReference type="ChEBI" id="CHEBI:59789"/>
    </ligand>
</feature>
<feature type="binding site" evidence="1">
    <location>
        <position position="249"/>
    </location>
    <ligand>
        <name>[4Fe-4S] cluster</name>
        <dbReference type="ChEBI" id="CHEBI:49883"/>
        <label>2</label>
        <note>4Fe-4S-substrate</note>
    </ligand>
</feature>
<feature type="binding site" evidence="1">
    <location>
        <position position="252"/>
    </location>
    <ligand>
        <name>[4Fe-4S] cluster</name>
        <dbReference type="ChEBI" id="CHEBI:49883"/>
        <label>2</label>
        <note>4Fe-4S-substrate</note>
    </ligand>
</feature>
<feature type="binding site" evidence="1">
    <location>
        <begin position="254"/>
        <end position="256"/>
    </location>
    <ligand>
        <name>GTP</name>
        <dbReference type="ChEBI" id="CHEBI:37565"/>
    </ligand>
</feature>
<feature type="binding site" evidence="1">
    <location>
        <position position="266"/>
    </location>
    <ligand>
        <name>[4Fe-4S] cluster</name>
        <dbReference type="ChEBI" id="CHEBI:49883"/>
        <label>2</label>
        <note>4Fe-4S-substrate</note>
    </ligand>
</feature>
<keyword id="KW-0004">4Fe-4S</keyword>
<keyword id="KW-0342">GTP-binding</keyword>
<keyword id="KW-0408">Iron</keyword>
<keyword id="KW-0411">Iron-sulfur</keyword>
<keyword id="KW-0456">Lyase</keyword>
<keyword id="KW-0479">Metal-binding</keyword>
<keyword id="KW-0501">Molybdenum cofactor biosynthesis</keyword>
<keyword id="KW-0547">Nucleotide-binding</keyword>
<keyword id="KW-1185">Reference proteome</keyword>
<keyword id="KW-0949">S-adenosyl-L-methionine</keyword>
<name>MOAA_CAMLR</name>
<protein>
    <recommendedName>
        <fullName evidence="1">GTP 3',8-cyclase</fullName>
        <ecNumber evidence="1">4.1.99.22</ecNumber>
    </recommendedName>
    <alternativeName>
        <fullName evidence="1">Molybdenum cofactor biosynthesis protein A</fullName>
    </alternativeName>
</protein>
<gene>
    <name evidence="1" type="primary">moaA</name>
    <name type="ordered locus">Cla_1426</name>
</gene>
<accession>B9KDV3</accession>
<evidence type="ECO:0000255" key="1">
    <source>
        <dbReference type="HAMAP-Rule" id="MF_01225"/>
    </source>
</evidence>
<evidence type="ECO:0000255" key="2">
    <source>
        <dbReference type="PROSITE-ProRule" id="PRU01266"/>
    </source>
</evidence>
<organism>
    <name type="scientific">Campylobacter lari (strain RM2100 / D67 / ATCC BAA-1060)</name>
    <dbReference type="NCBI Taxonomy" id="306263"/>
    <lineage>
        <taxon>Bacteria</taxon>
        <taxon>Pseudomonadati</taxon>
        <taxon>Campylobacterota</taxon>
        <taxon>Epsilonproteobacteria</taxon>
        <taxon>Campylobacterales</taxon>
        <taxon>Campylobacteraceae</taxon>
        <taxon>Campylobacter</taxon>
    </lineage>
</organism>
<proteinExistence type="inferred from homology"/>
<comment type="function">
    <text evidence="1">Catalyzes the cyclization of GTP to (8S)-3',8-cyclo-7,8-dihydroguanosine 5'-triphosphate.</text>
</comment>
<comment type="catalytic activity">
    <reaction evidence="1">
        <text>GTP + AH2 + S-adenosyl-L-methionine = (8S)-3',8-cyclo-7,8-dihydroguanosine 5'-triphosphate + 5'-deoxyadenosine + L-methionine + A + H(+)</text>
        <dbReference type="Rhea" id="RHEA:49576"/>
        <dbReference type="ChEBI" id="CHEBI:13193"/>
        <dbReference type="ChEBI" id="CHEBI:15378"/>
        <dbReference type="ChEBI" id="CHEBI:17319"/>
        <dbReference type="ChEBI" id="CHEBI:17499"/>
        <dbReference type="ChEBI" id="CHEBI:37565"/>
        <dbReference type="ChEBI" id="CHEBI:57844"/>
        <dbReference type="ChEBI" id="CHEBI:59789"/>
        <dbReference type="ChEBI" id="CHEBI:131766"/>
        <dbReference type="EC" id="4.1.99.22"/>
    </reaction>
</comment>
<comment type="cofactor">
    <cofactor evidence="1">
        <name>[4Fe-4S] cluster</name>
        <dbReference type="ChEBI" id="CHEBI:49883"/>
    </cofactor>
    <text evidence="1">Binds 2 [4Fe-4S] clusters. Binds 1 [4Fe-4S] cluster coordinated with 3 cysteines and an exchangeable S-adenosyl-L-methionine and 1 [4Fe-4S] cluster coordinated with 3 cysteines and the GTP-derived substrate.</text>
</comment>
<comment type="pathway">
    <text evidence="1">Cofactor biosynthesis; molybdopterin biosynthesis.</text>
</comment>
<comment type="subunit">
    <text evidence="1">Monomer and homodimer.</text>
</comment>
<comment type="similarity">
    <text evidence="1">Belongs to the radical SAM superfamily. MoaA family.</text>
</comment>
<sequence length="322" mass="36715">MLVDSYGRVIDYLRISVTQRCNFRCLYCMPKTPFEWSAKENLLSFEELFMFVKVCIDEGVKKIRITGGEPLVRKDLYKFIAMISEYKQDIDLALTTNASLLKQQAKDLRQAGLKRINISLDTLKEDVAFKLAQKNILKDVLNGIDEALNLGFNVKFNTVALKGINDSEFIDLLEFAKVRKSQIRFIEFMENYHAYGDLKGLKSAEILNIIAQKYSFKQGEKSSNAPATIYELEDGYKFGIIDPHSHDFCDSCNRIRLSAEGLLIPCLYYDEALSIKKAIRNKDIAGACEVLKTVIKNKSEKNRWAENEANQSSTRAFYQTGG</sequence>
<dbReference type="EC" id="4.1.99.22" evidence="1"/>
<dbReference type="EMBL" id="CP000932">
    <property type="protein sequence ID" value="ACM64741.1"/>
    <property type="molecule type" value="Genomic_DNA"/>
</dbReference>
<dbReference type="RefSeq" id="WP_012662124.1">
    <property type="nucleotide sequence ID" value="NC_012039.1"/>
</dbReference>
<dbReference type="RefSeq" id="WP_012662125.1">
    <property type="nucleotide sequence ID" value="NC_012039.1"/>
</dbReference>
<dbReference type="SMR" id="B9KDV3"/>
<dbReference type="STRING" id="306263.Cla_1426"/>
<dbReference type="KEGG" id="cla:CLA_1426"/>
<dbReference type="PATRIC" id="fig|306263.5.peg.1412"/>
<dbReference type="eggNOG" id="COG2896">
    <property type="taxonomic scope" value="Bacteria"/>
</dbReference>
<dbReference type="HOGENOM" id="CLU_009273_0_1_7"/>
<dbReference type="UniPathway" id="UPA00344"/>
<dbReference type="Proteomes" id="UP000007727">
    <property type="component" value="Chromosome"/>
</dbReference>
<dbReference type="GO" id="GO:0051539">
    <property type="term" value="F:4 iron, 4 sulfur cluster binding"/>
    <property type="evidence" value="ECO:0007669"/>
    <property type="project" value="UniProtKB-UniRule"/>
</dbReference>
<dbReference type="GO" id="GO:0061799">
    <property type="term" value="F:cyclic pyranopterin monophosphate synthase activity"/>
    <property type="evidence" value="ECO:0007669"/>
    <property type="project" value="TreeGrafter"/>
</dbReference>
<dbReference type="GO" id="GO:0061798">
    <property type="term" value="F:GTP 3',8'-cyclase activity"/>
    <property type="evidence" value="ECO:0007669"/>
    <property type="project" value="UniProtKB-UniRule"/>
</dbReference>
<dbReference type="GO" id="GO:0005525">
    <property type="term" value="F:GTP binding"/>
    <property type="evidence" value="ECO:0007669"/>
    <property type="project" value="UniProtKB-UniRule"/>
</dbReference>
<dbReference type="GO" id="GO:0046872">
    <property type="term" value="F:metal ion binding"/>
    <property type="evidence" value="ECO:0007669"/>
    <property type="project" value="UniProtKB-KW"/>
</dbReference>
<dbReference type="GO" id="GO:1904047">
    <property type="term" value="F:S-adenosyl-L-methionine binding"/>
    <property type="evidence" value="ECO:0007669"/>
    <property type="project" value="UniProtKB-UniRule"/>
</dbReference>
<dbReference type="GO" id="GO:0006777">
    <property type="term" value="P:Mo-molybdopterin cofactor biosynthetic process"/>
    <property type="evidence" value="ECO:0007669"/>
    <property type="project" value="UniProtKB-UniRule"/>
</dbReference>
<dbReference type="CDD" id="cd01335">
    <property type="entry name" value="Radical_SAM"/>
    <property type="match status" value="1"/>
</dbReference>
<dbReference type="CDD" id="cd21117">
    <property type="entry name" value="Twitch_MoaA"/>
    <property type="match status" value="1"/>
</dbReference>
<dbReference type="Gene3D" id="3.20.20.70">
    <property type="entry name" value="Aldolase class I"/>
    <property type="match status" value="1"/>
</dbReference>
<dbReference type="HAMAP" id="MF_01225_B">
    <property type="entry name" value="MoaA_B"/>
    <property type="match status" value="1"/>
</dbReference>
<dbReference type="InterPro" id="IPR013785">
    <property type="entry name" value="Aldolase_TIM"/>
</dbReference>
<dbReference type="InterPro" id="IPR006638">
    <property type="entry name" value="Elp3/MiaA/NifB-like_rSAM"/>
</dbReference>
<dbReference type="InterPro" id="IPR013483">
    <property type="entry name" value="MoaA"/>
</dbReference>
<dbReference type="InterPro" id="IPR000385">
    <property type="entry name" value="MoaA_NifB_PqqE_Fe-S-bd_CS"/>
</dbReference>
<dbReference type="InterPro" id="IPR010505">
    <property type="entry name" value="MoaA_twitch"/>
</dbReference>
<dbReference type="InterPro" id="IPR050105">
    <property type="entry name" value="MoCo_biosynth_MoaA/MoaC"/>
</dbReference>
<dbReference type="InterPro" id="IPR007197">
    <property type="entry name" value="rSAM"/>
</dbReference>
<dbReference type="NCBIfam" id="TIGR02666">
    <property type="entry name" value="moaA"/>
    <property type="match status" value="1"/>
</dbReference>
<dbReference type="PANTHER" id="PTHR22960:SF0">
    <property type="entry name" value="MOLYBDENUM COFACTOR BIOSYNTHESIS PROTEIN 1"/>
    <property type="match status" value="1"/>
</dbReference>
<dbReference type="PANTHER" id="PTHR22960">
    <property type="entry name" value="MOLYBDOPTERIN COFACTOR SYNTHESIS PROTEIN A"/>
    <property type="match status" value="1"/>
</dbReference>
<dbReference type="Pfam" id="PF13353">
    <property type="entry name" value="Fer4_12"/>
    <property type="match status" value="1"/>
</dbReference>
<dbReference type="Pfam" id="PF06463">
    <property type="entry name" value="Mob_synth_C"/>
    <property type="match status" value="1"/>
</dbReference>
<dbReference type="Pfam" id="PF04055">
    <property type="entry name" value="Radical_SAM"/>
    <property type="match status" value="1"/>
</dbReference>
<dbReference type="SFLD" id="SFLDG01383">
    <property type="entry name" value="cyclic_pyranopterin_phosphate"/>
    <property type="match status" value="1"/>
</dbReference>
<dbReference type="SFLD" id="SFLDG01386">
    <property type="entry name" value="main_SPASM_domain-containing"/>
    <property type="match status" value="1"/>
</dbReference>
<dbReference type="SMART" id="SM00729">
    <property type="entry name" value="Elp3"/>
    <property type="match status" value="1"/>
</dbReference>
<dbReference type="SUPFAM" id="SSF102114">
    <property type="entry name" value="Radical SAM enzymes"/>
    <property type="match status" value="1"/>
</dbReference>
<dbReference type="PROSITE" id="PS01305">
    <property type="entry name" value="MOAA_NIFB_PQQE"/>
    <property type="match status" value="1"/>
</dbReference>
<dbReference type="PROSITE" id="PS51918">
    <property type="entry name" value="RADICAL_SAM"/>
    <property type="match status" value="1"/>
</dbReference>